<comment type="function">
    <text evidence="1">One of several proteins that assist in the late maturation steps of the functional core of the 30S ribosomal subunit. Helps release RbfA from mature subunits. May play a role in the assembly of ribosomal proteins into the subunit. Circularly permuted GTPase that catalyzes slow GTP hydrolysis, GTPase activity is stimulated by the 30S ribosomal subunit.</text>
</comment>
<comment type="cofactor">
    <cofactor evidence="1">
        <name>Zn(2+)</name>
        <dbReference type="ChEBI" id="CHEBI:29105"/>
    </cofactor>
    <text evidence="1">Binds 1 zinc ion per subunit.</text>
</comment>
<comment type="subunit">
    <text evidence="1">Monomer. Associates with 30S ribosomal subunit, binds 16S rRNA.</text>
</comment>
<comment type="subcellular location">
    <subcellularLocation>
        <location evidence="1">Cytoplasm</location>
    </subcellularLocation>
</comment>
<comment type="similarity">
    <text evidence="1">Belongs to the TRAFAC class YlqF/YawG GTPase family. RsgA subfamily.</text>
</comment>
<accession>Q87VI5</accession>
<feature type="chain" id="PRO_0000171507" description="Small ribosomal subunit biogenesis GTPase RsgA">
    <location>
        <begin position="1"/>
        <end position="343"/>
    </location>
</feature>
<feature type="domain" description="CP-type G" evidence="2">
    <location>
        <begin position="116"/>
        <end position="275"/>
    </location>
</feature>
<feature type="binding site" evidence="1">
    <location>
        <begin position="163"/>
        <end position="166"/>
    </location>
    <ligand>
        <name>GTP</name>
        <dbReference type="ChEBI" id="CHEBI:37565"/>
    </ligand>
</feature>
<feature type="binding site" evidence="1">
    <location>
        <begin position="217"/>
        <end position="225"/>
    </location>
    <ligand>
        <name>GTP</name>
        <dbReference type="ChEBI" id="CHEBI:37565"/>
    </ligand>
</feature>
<feature type="binding site" evidence="1">
    <location>
        <position position="299"/>
    </location>
    <ligand>
        <name>Zn(2+)</name>
        <dbReference type="ChEBI" id="CHEBI:29105"/>
    </ligand>
</feature>
<feature type="binding site" evidence="1">
    <location>
        <position position="304"/>
    </location>
    <ligand>
        <name>Zn(2+)</name>
        <dbReference type="ChEBI" id="CHEBI:29105"/>
    </ligand>
</feature>
<feature type="binding site" evidence="1">
    <location>
        <position position="306"/>
    </location>
    <ligand>
        <name>Zn(2+)</name>
        <dbReference type="ChEBI" id="CHEBI:29105"/>
    </ligand>
</feature>
<feature type="binding site" evidence="1">
    <location>
        <position position="312"/>
    </location>
    <ligand>
        <name>Zn(2+)</name>
        <dbReference type="ChEBI" id="CHEBI:29105"/>
    </ligand>
</feature>
<gene>
    <name evidence="1" type="primary">rsgA</name>
    <name type="ordered locus">PSPTO_4951</name>
</gene>
<reference key="1">
    <citation type="journal article" date="2003" name="Proc. Natl. Acad. Sci. U.S.A.">
        <title>The complete genome sequence of the Arabidopsis and tomato pathogen Pseudomonas syringae pv. tomato DC3000.</title>
        <authorList>
            <person name="Buell C.R."/>
            <person name="Joardar V."/>
            <person name="Lindeberg M."/>
            <person name="Selengut J."/>
            <person name="Paulsen I.T."/>
            <person name="Gwinn M.L."/>
            <person name="Dodson R.J."/>
            <person name="DeBoy R.T."/>
            <person name="Durkin A.S."/>
            <person name="Kolonay J.F."/>
            <person name="Madupu R."/>
            <person name="Daugherty S.C."/>
            <person name="Brinkac L.M."/>
            <person name="Beanan M.J."/>
            <person name="Haft D.H."/>
            <person name="Nelson W.C."/>
            <person name="Davidsen T.M."/>
            <person name="Zafar N."/>
            <person name="Zhou L."/>
            <person name="Liu J."/>
            <person name="Yuan Q."/>
            <person name="Khouri H.M."/>
            <person name="Fedorova N.B."/>
            <person name="Tran B."/>
            <person name="Russell D."/>
            <person name="Berry K.J."/>
            <person name="Utterback T.R."/>
            <person name="Van Aken S.E."/>
            <person name="Feldblyum T.V."/>
            <person name="D'Ascenzo M."/>
            <person name="Deng W.-L."/>
            <person name="Ramos A.R."/>
            <person name="Alfano J.R."/>
            <person name="Cartinhour S."/>
            <person name="Chatterjee A.K."/>
            <person name="Delaney T.P."/>
            <person name="Lazarowitz S.G."/>
            <person name="Martin G.B."/>
            <person name="Schneider D.J."/>
            <person name="Tang X."/>
            <person name="Bender C.L."/>
            <person name="White O."/>
            <person name="Fraser C.M."/>
            <person name="Collmer A."/>
        </authorList>
    </citation>
    <scope>NUCLEOTIDE SEQUENCE [LARGE SCALE GENOMIC DNA]</scope>
    <source>
        <strain>ATCC BAA-871 / DC3000</strain>
    </source>
</reference>
<name>RSGA_PSESM</name>
<evidence type="ECO:0000255" key="1">
    <source>
        <dbReference type="HAMAP-Rule" id="MF_01820"/>
    </source>
</evidence>
<evidence type="ECO:0000255" key="2">
    <source>
        <dbReference type="PROSITE-ProRule" id="PRU01058"/>
    </source>
</evidence>
<proteinExistence type="inferred from homology"/>
<dbReference type="EC" id="3.6.1.-" evidence="1"/>
<dbReference type="EMBL" id="AE016853">
    <property type="protein sequence ID" value="AAO58379.1"/>
    <property type="molecule type" value="Genomic_DNA"/>
</dbReference>
<dbReference type="RefSeq" id="NP_794684.1">
    <property type="nucleotide sequence ID" value="NC_004578.1"/>
</dbReference>
<dbReference type="RefSeq" id="WP_005763005.1">
    <property type="nucleotide sequence ID" value="NC_004578.1"/>
</dbReference>
<dbReference type="SMR" id="Q87VI5"/>
<dbReference type="STRING" id="223283.PSPTO_4951"/>
<dbReference type="GeneID" id="1186636"/>
<dbReference type="KEGG" id="pst:PSPTO_4951"/>
<dbReference type="PATRIC" id="fig|223283.9.peg.5065"/>
<dbReference type="eggNOG" id="COG1162">
    <property type="taxonomic scope" value="Bacteria"/>
</dbReference>
<dbReference type="HOGENOM" id="CLU_033617_2_0_6"/>
<dbReference type="OrthoDB" id="9809485at2"/>
<dbReference type="PhylomeDB" id="Q87VI5"/>
<dbReference type="Proteomes" id="UP000002515">
    <property type="component" value="Chromosome"/>
</dbReference>
<dbReference type="GO" id="GO:0005737">
    <property type="term" value="C:cytoplasm"/>
    <property type="evidence" value="ECO:0007669"/>
    <property type="project" value="UniProtKB-SubCell"/>
</dbReference>
<dbReference type="GO" id="GO:0005525">
    <property type="term" value="F:GTP binding"/>
    <property type="evidence" value="ECO:0007669"/>
    <property type="project" value="UniProtKB-UniRule"/>
</dbReference>
<dbReference type="GO" id="GO:0003924">
    <property type="term" value="F:GTPase activity"/>
    <property type="evidence" value="ECO:0007669"/>
    <property type="project" value="UniProtKB-UniRule"/>
</dbReference>
<dbReference type="GO" id="GO:0046872">
    <property type="term" value="F:metal ion binding"/>
    <property type="evidence" value="ECO:0007669"/>
    <property type="project" value="UniProtKB-KW"/>
</dbReference>
<dbReference type="GO" id="GO:0019843">
    <property type="term" value="F:rRNA binding"/>
    <property type="evidence" value="ECO:0007669"/>
    <property type="project" value="UniProtKB-KW"/>
</dbReference>
<dbReference type="GO" id="GO:0042274">
    <property type="term" value="P:ribosomal small subunit biogenesis"/>
    <property type="evidence" value="ECO:0007669"/>
    <property type="project" value="UniProtKB-UniRule"/>
</dbReference>
<dbReference type="CDD" id="cd01854">
    <property type="entry name" value="YjeQ_EngC"/>
    <property type="match status" value="1"/>
</dbReference>
<dbReference type="Gene3D" id="2.40.50.140">
    <property type="entry name" value="Nucleic acid-binding proteins"/>
    <property type="match status" value="1"/>
</dbReference>
<dbReference type="Gene3D" id="3.40.50.300">
    <property type="entry name" value="P-loop containing nucleotide triphosphate hydrolases"/>
    <property type="match status" value="1"/>
</dbReference>
<dbReference type="Gene3D" id="1.10.40.50">
    <property type="entry name" value="Probable gtpase engc, domain 3"/>
    <property type="match status" value="1"/>
</dbReference>
<dbReference type="HAMAP" id="MF_01820">
    <property type="entry name" value="GTPase_RsgA"/>
    <property type="match status" value="1"/>
</dbReference>
<dbReference type="InterPro" id="IPR030378">
    <property type="entry name" value="G_CP_dom"/>
</dbReference>
<dbReference type="InterPro" id="IPR012340">
    <property type="entry name" value="NA-bd_OB-fold"/>
</dbReference>
<dbReference type="InterPro" id="IPR027417">
    <property type="entry name" value="P-loop_NTPase"/>
</dbReference>
<dbReference type="InterPro" id="IPR004881">
    <property type="entry name" value="Ribosome_biogen_GTPase_RsgA"/>
</dbReference>
<dbReference type="InterPro" id="IPR010914">
    <property type="entry name" value="RsgA_GTPase_dom"/>
</dbReference>
<dbReference type="NCBIfam" id="NF008931">
    <property type="entry name" value="PRK12288.1"/>
    <property type="match status" value="1"/>
</dbReference>
<dbReference type="NCBIfam" id="TIGR00157">
    <property type="entry name" value="ribosome small subunit-dependent GTPase A"/>
    <property type="match status" value="1"/>
</dbReference>
<dbReference type="PANTHER" id="PTHR32120">
    <property type="entry name" value="SMALL RIBOSOMAL SUBUNIT BIOGENESIS GTPASE RSGA"/>
    <property type="match status" value="1"/>
</dbReference>
<dbReference type="PANTHER" id="PTHR32120:SF11">
    <property type="entry name" value="SMALL RIBOSOMAL SUBUNIT BIOGENESIS GTPASE RSGA 1, MITOCHONDRIAL-RELATED"/>
    <property type="match status" value="1"/>
</dbReference>
<dbReference type="Pfam" id="PF03193">
    <property type="entry name" value="RsgA_GTPase"/>
    <property type="match status" value="1"/>
</dbReference>
<dbReference type="SUPFAM" id="SSF52540">
    <property type="entry name" value="P-loop containing nucleoside triphosphate hydrolases"/>
    <property type="match status" value="1"/>
</dbReference>
<dbReference type="PROSITE" id="PS50936">
    <property type="entry name" value="ENGC_GTPASE"/>
    <property type="match status" value="1"/>
</dbReference>
<dbReference type="PROSITE" id="PS51721">
    <property type="entry name" value="G_CP"/>
    <property type="match status" value="1"/>
</dbReference>
<protein>
    <recommendedName>
        <fullName evidence="1">Small ribosomal subunit biogenesis GTPase RsgA</fullName>
        <ecNumber evidence="1">3.6.1.-</ecNumber>
    </recommendedName>
</protein>
<organism>
    <name type="scientific">Pseudomonas syringae pv. tomato (strain ATCC BAA-871 / DC3000)</name>
    <dbReference type="NCBI Taxonomy" id="223283"/>
    <lineage>
        <taxon>Bacteria</taxon>
        <taxon>Pseudomonadati</taxon>
        <taxon>Pseudomonadota</taxon>
        <taxon>Gammaproteobacteria</taxon>
        <taxon>Pseudomonadales</taxon>
        <taxon>Pseudomonadaceae</taxon>
        <taxon>Pseudomonas</taxon>
    </lineage>
</organism>
<sequence>MAKRQLNRRQNWRIEKIQGERAARAAKRESVTLETLEGGDLGPEQTGLVIAHFGVQVEVEAQEGEDVGKVFRCHLRANLPALVTGDRVVWRAGNQGIGVIVAQLPRTTELRRPDSRGQLKPVAANVDLIVIVFAPMPEPHANLIDRYLVAAEHAGIHPLLLLNKADLIDEQNAPALNALLAVYRTLGYPVLEVSAHQGDGMQSLQSQLDGHISVFVGQSGVGKSSLVNSLLPETDTRVGPLSEVSGQGTHTTTTARLFHFPRGGDLIDSPGIREFGLGHVSRADVEAGFIEFNDLIGTCRFRDCKHDREPGCALLKGLEDGRVQQQRMNSYRSIIASLPQDSY</sequence>
<keyword id="KW-0963">Cytoplasm</keyword>
<keyword id="KW-0342">GTP-binding</keyword>
<keyword id="KW-0378">Hydrolase</keyword>
<keyword id="KW-0479">Metal-binding</keyword>
<keyword id="KW-0547">Nucleotide-binding</keyword>
<keyword id="KW-1185">Reference proteome</keyword>
<keyword id="KW-0690">Ribosome biogenesis</keyword>
<keyword id="KW-0694">RNA-binding</keyword>
<keyword id="KW-0699">rRNA-binding</keyword>
<keyword id="KW-0862">Zinc</keyword>